<evidence type="ECO:0000250" key="1"/>
<evidence type="ECO:0000255" key="2">
    <source>
        <dbReference type="HAMAP-Rule" id="MF_00100"/>
    </source>
</evidence>
<evidence type="ECO:0000256" key="3">
    <source>
        <dbReference type="SAM" id="MobiDB-lite"/>
    </source>
</evidence>
<comment type="function">
    <text evidence="2">One of the essential components for the initiation of protein synthesis. Protects formylmethionyl-tRNA from spontaneous hydrolysis and promotes its binding to the 30S ribosomal subunits. Also involved in the hydrolysis of GTP during the formation of the 70S ribosomal complex.</text>
</comment>
<comment type="subcellular location">
    <subcellularLocation>
        <location evidence="2">Cytoplasm</location>
    </subcellularLocation>
</comment>
<comment type="similarity">
    <text evidence="2">Belongs to the TRAFAC class translation factor GTPase superfamily. Classic translation factor GTPase family. IF-2 subfamily.</text>
</comment>
<keyword id="KW-0963">Cytoplasm</keyword>
<keyword id="KW-0342">GTP-binding</keyword>
<keyword id="KW-0396">Initiation factor</keyword>
<keyword id="KW-0547">Nucleotide-binding</keyword>
<keyword id="KW-0648">Protein biosynthesis</keyword>
<keyword id="KW-1185">Reference proteome</keyword>
<reference key="1">
    <citation type="journal article" date="2001" name="Proc. Natl. Acad. Sci. U.S.A.">
        <title>Genome sequence of an industrial microorganism Streptomyces avermitilis: deducing the ability of producing secondary metabolites.</title>
        <authorList>
            <person name="Omura S."/>
            <person name="Ikeda H."/>
            <person name="Ishikawa J."/>
            <person name="Hanamoto A."/>
            <person name="Takahashi C."/>
            <person name="Shinose M."/>
            <person name="Takahashi Y."/>
            <person name="Horikawa H."/>
            <person name="Nakazawa H."/>
            <person name="Osonoe T."/>
            <person name="Kikuchi H."/>
            <person name="Shiba T."/>
            <person name="Sakaki Y."/>
            <person name="Hattori M."/>
        </authorList>
    </citation>
    <scope>NUCLEOTIDE SEQUENCE [LARGE SCALE GENOMIC DNA]</scope>
    <source>
        <strain>ATCC 31267 / DSM 46492 / JCM 5070 / NBRC 14893 / NCIMB 12804 / NRRL 8165 / MA-4680</strain>
    </source>
</reference>
<reference key="2">
    <citation type="journal article" date="2003" name="Nat. Biotechnol.">
        <title>Complete genome sequence and comparative analysis of the industrial microorganism Streptomyces avermitilis.</title>
        <authorList>
            <person name="Ikeda H."/>
            <person name="Ishikawa J."/>
            <person name="Hanamoto A."/>
            <person name="Shinose M."/>
            <person name="Kikuchi H."/>
            <person name="Shiba T."/>
            <person name="Sakaki Y."/>
            <person name="Hattori M."/>
            <person name="Omura S."/>
        </authorList>
    </citation>
    <scope>NUCLEOTIDE SEQUENCE [LARGE SCALE GENOMIC DNA]</scope>
    <source>
        <strain>ATCC 31267 / DSM 46492 / JCM 5070 / NBRC 14893 / NCIMB 12804 / NRRL 8165 / MA-4680</strain>
    </source>
</reference>
<proteinExistence type="inferred from homology"/>
<protein>
    <recommendedName>
        <fullName evidence="2">Translation initiation factor IF-2</fullName>
    </recommendedName>
</protein>
<accession>Q82K53</accession>
<gene>
    <name evidence="2" type="primary">infB</name>
    <name type="ordered locus">SAV_2551</name>
</gene>
<name>IF2_STRAW</name>
<dbReference type="EMBL" id="BA000030">
    <property type="protein sequence ID" value="BAC70262.1"/>
    <property type="molecule type" value="Genomic_DNA"/>
</dbReference>
<dbReference type="SMR" id="Q82K53"/>
<dbReference type="KEGG" id="sma:SAVERM_2551"/>
<dbReference type="eggNOG" id="COG0532">
    <property type="taxonomic scope" value="Bacteria"/>
</dbReference>
<dbReference type="HOGENOM" id="CLU_006301_9_4_11"/>
<dbReference type="OrthoDB" id="9811804at2"/>
<dbReference type="Proteomes" id="UP000000428">
    <property type="component" value="Chromosome"/>
</dbReference>
<dbReference type="GO" id="GO:0005829">
    <property type="term" value="C:cytosol"/>
    <property type="evidence" value="ECO:0007669"/>
    <property type="project" value="TreeGrafter"/>
</dbReference>
<dbReference type="GO" id="GO:0005525">
    <property type="term" value="F:GTP binding"/>
    <property type="evidence" value="ECO:0007669"/>
    <property type="project" value="UniProtKB-KW"/>
</dbReference>
<dbReference type="GO" id="GO:0003924">
    <property type="term" value="F:GTPase activity"/>
    <property type="evidence" value="ECO:0007669"/>
    <property type="project" value="UniProtKB-UniRule"/>
</dbReference>
<dbReference type="GO" id="GO:0003743">
    <property type="term" value="F:translation initiation factor activity"/>
    <property type="evidence" value="ECO:0007669"/>
    <property type="project" value="UniProtKB-UniRule"/>
</dbReference>
<dbReference type="CDD" id="cd01887">
    <property type="entry name" value="IF2_eIF5B"/>
    <property type="match status" value="1"/>
</dbReference>
<dbReference type="CDD" id="cd03702">
    <property type="entry name" value="IF2_mtIF2_II"/>
    <property type="match status" value="1"/>
</dbReference>
<dbReference type="CDD" id="cd03692">
    <property type="entry name" value="mtIF2_IVc"/>
    <property type="match status" value="1"/>
</dbReference>
<dbReference type="FunFam" id="1.10.10.2480:FF:000003">
    <property type="entry name" value="Translation initiation factor IF-2"/>
    <property type="match status" value="1"/>
</dbReference>
<dbReference type="FunFam" id="2.40.30.10:FF:000007">
    <property type="entry name" value="Translation initiation factor IF-2"/>
    <property type="match status" value="1"/>
</dbReference>
<dbReference type="FunFam" id="2.40.30.10:FF:000008">
    <property type="entry name" value="Translation initiation factor IF-2"/>
    <property type="match status" value="1"/>
</dbReference>
<dbReference type="FunFam" id="3.40.50.10050:FF:000001">
    <property type="entry name" value="Translation initiation factor IF-2"/>
    <property type="match status" value="1"/>
</dbReference>
<dbReference type="FunFam" id="3.40.50.300:FF:000019">
    <property type="entry name" value="Translation initiation factor IF-2"/>
    <property type="match status" value="1"/>
</dbReference>
<dbReference type="Gene3D" id="1.10.10.2480">
    <property type="match status" value="1"/>
</dbReference>
<dbReference type="Gene3D" id="3.40.50.300">
    <property type="entry name" value="P-loop containing nucleotide triphosphate hydrolases"/>
    <property type="match status" value="1"/>
</dbReference>
<dbReference type="Gene3D" id="2.40.30.10">
    <property type="entry name" value="Translation factors"/>
    <property type="match status" value="2"/>
</dbReference>
<dbReference type="Gene3D" id="3.40.50.10050">
    <property type="entry name" value="Translation initiation factor IF- 2, domain 3"/>
    <property type="match status" value="1"/>
</dbReference>
<dbReference type="HAMAP" id="MF_00100_B">
    <property type="entry name" value="IF_2_B"/>
    <property type="match status" value="1"/>
</dbReference>
<dbReference type="InterPro" id="IPR053905">
    <property type="entry name" value="EF-G-like_DII"/>
</dbReference>
<dbReference type="InterPro" id="IPR044145">
    <property type="entry name" value="IF2_II"/>
</dbReference>
<dbReference type="InterPro" id="IPR006847">
    <property type="entry name" value="IF2_N"/>
</dbReference>
<dbReference type="InterPro" id="IPR027417">
    <property type="entry name" value="P-loop_NTPase"/>
</dbReference>
<dbReference type="InterPro" id="IPR005225">
    <property type="entry name" value="Small_GTP-bd"/>
</dbReference>
<dbReference type="InterPro" id="IPR000795">
    <property type="entry name" value="T_Tr_GTP-bd_dom"/>
</dbReference>
<dbReference type="InterPro" id="IPR000178">
    <property type="entry name" value="TF_IF2_bacterial-like"/>
</dbReference>
<dbReference type="InterPro" id="IPR015760">
    <property type="entry name" value="TIF_IF2"/>
</dbReference>
<dbReference type="InterPro" id="IPR023115">
    <property type="entry name" value="TIF_IF2_dom3"/>
</dbReference>
<dbReference type="InterPro" id="IPR036925">
    <property type="entry name" value="TIF_IF2_dom3_sf"/>
</dbReference>
<dbReference type="InterPro" id="IPR009000">
    <property type="entry name" value="Transl_B-barrel_sf"/>
</dbReference>
<dbReference type="NCBIfam" id="TIGR00487">
    <property type="entry name" value="IF-2"/>
    <property type="match status" value="1"/>
</dbReference>
<dbReference type="NCBIfam" id="TIGR00231">
    <property type="entry name" value="small_GTP"/>
    <property type="match status" value="1"/>
</dbReference>
<dbReference type="PANTHER" id="PTHR43381:SF5">
    <property type="entry name" value="TR-TYPE G DOMAIN-CONTAINING PROTEIN"/>
    <property type="match status" value="1"/>
</dbReference>
<dbReference type="PANTHER" id="PTHR43381">
    <property type="entry name" value="TRANSLATION INITIATION FACTOR IF-2-RELATED"/>
    <property type="match status" value="1"/>
</dbReference>
<dbReference type="Pfam" id="PF22042">
    <property type="entry name" value="EF-G_D2"/>
    <property type="match status" value="1"/>
</dbReference>
<dbReference type="Pfam" id="PF00009">
    <property type="entry name" value="GTP_EFTU"/>
    <property type="match status" value="1"/>
</dbReference>
<dbReference type="Pfam" id="PF11987">
    <property type="entry name" value="IF-2"/>
    <property type="match status" value="1"/>
</dbReference>
<dbReference type="Pfam" id="PF04760">
    <property type="entry name" value="IF2_N"/>
    <property type="match status" value="2"/>
</dbReference>
<dbReference type="PRINTS" id="PR00315">
    <property type="entry name" value="ELONGATNFCT"/>
</dbReference>
<dbReference type="SMART" id="SM00173">
    <property type="entry name" value="RAS"/>
    <property type="match status" value="1"/>
</dbReference>
<dbReference type="SUPFAM" id="SSF52156">
    <property type="entry name" value="Initiation factor IF2/eIF5b, domain 3"/>
    <property type="match status" value="1"/>
</dbReference>
<dbReference type="SUPFAM" id="SSF52540">
    <property type="entry name" value="P-loop containing nucleoside triphosphate hydrolases"/>
    <property type="match status" value="1"/>
</dbReference>
<dbReference type="SUPFAM" id="SSF50447">
    <property type="entry name" value="Translation proteins"/>
    <property type="match status" value="2"/>
</dbReference>
<dbReference type="PROSITE" id="PS51722">
    <property type="entry name" value="G_TR_2"/>
    <property type="match status" value="1"/>
</dbReference>
<dbReference type="PROSITE" id="PS01176">
    <property type="entry name" value="IF2"/>
    <property type="match status" value="1"/>
</dbReference>
<feature type="chain" id="PRO_0000137260" description="Translation initiation factor IF-2">
    <location>
        <begin position="1"/>
        <end position="1046"/>
    </location>
</feature>
<feature type="domain" description="tr-type G">
    <location>
        <begin position="539"/>
        <end position="711"/>
    </location>
</feature>
<feature type="region of interest" description="Disordered" evidence="3">
    <location>
        <begin position="49"/>
        <end position="450"/>
    </location>
</feature>
<feature type="region of interest" description="G1" evidence="1">
    <location>
        <begin position="548"/>
        <end position="555"/>
    </location>
</feature>
<feature type="region of interest" description="G2" evidence="1">
    <location>
        <begin position="573"/>
        <end position="577"/>
    </location>
</feature>
<feature type="region of interest" description="G3" evidence="1">
    <location>
        <begin position="598"/>
        <end position="601"/>
    </location>
</feature>
<feature type="region of interest" description="G4" evidence="1">
    <location>
        <begin position="652"/>
        <end position="655"/>
    </location>
</feature>
<feature type="region of interest" description="G5" evidence="1">
    <location>
        <begin position="688"/>
        <end position="690"/>
    </location>
</feature>
<feature type="compositionally biased region" description="Low complexity" evidence="3">
    <location>
        <begin position="57"/>
        <end position="80"/>
    </location>
</feature>
<feature type="compositionally biased region" description="Low complexity" evidence="3">
    <location>
        <begin position="89"/>
        <end position="106"/>
    </location>
</feature>
<feature type="compositionally biased region" description="Pro residues" evidence="3">
    <location>
        <begin position="107"/>
        <end position="128"/>
    </location>
</feature>
<feature type="compositionally biased region" description="Low complexity" evidence="3">
    <location>
        <begin position="129"/>
        <end position="169"/>
    </location>
</feature>
<feature type="compositionally biased region" description="Basic and acidic residues" evidence="3">
    <location>
        <begin position="177"/>
        <end position="194"/>
    </location>
</feature>
<feature type="compositionally biased region" description="Low complexity" evidence="3">
    <location>
        <begin position="195"/>
        <end position="214"/>
    </location>
</feature>
<feature type="compositionally biased region" description="Gly residues" evidence="3">
    <location>
        <begin position="239"/>
        <end position="248"/>
    </location>
</feature>
<feature type="compositionally biased region" description="Gly residues" evidence="3">
    <location>
        <begin position="266"/>
        <end position="280"/>
    </location>
</feature>
<feature type="compositionally biased region" description="Low complexity" evidence="3">
    <location>
        <begin position="302"/>
        <end position="318"/>
    </location>
</feature>
<feature type="compositionally biased region" description="Gly residues" evidence="3">
    <location>
        <begin position="319"/>
        <end position="414"/>
    </location>
</feature>
<feature type="compositionally biased region" description="Basic residues" evidence="3">
    <location>
        <begin position="418"/>
        <end position="427"/>
    </location>
</feature>
<feature type="binding site" evidence="2">
    <location>
        <begin position="548"/>
        <end position="555"/>
    </location>
    <ligand>
        <name>GTP</name>
        <dbReference type="ChEBI" id="CHEBI:37565"/>
    </ligand>
</feature>
<feature type="binding site" evidence="2">
    <location>
        <begin position="598"/>
        <end position="602"/>
    </location>
    <ligand>
        <name>GTP</name>
        <dbReference type="ChEBI" id="CHEBI:37565"/>
    </ligand>
</feature>
<feature type="binding site" evidence="2">
    <location>
        <begin position="652"/>
        <end position="655"/>
    </location>
    <ligand>
        <name>GTP</name>
        <dbReference type="ChEBI" id="CHEBI:37565"/>
    </ligand>
</feature>
<sequence>MAKVRVYELAKEFGVESKVVMAKLQELGEFVRSASSTIEAPVVRKLTDALQQGNGGKAAPRKAAPAKPGAPSPAQAARPAAPRPPAPKPAAAERPAAAERPAAAPAAPGPRPGPKPAPRPAPAAPAPAAPEFTAPPSAPAAPAAAASGPRPGARPGAPKPGGARPATPGQGQGGQVRGERTDRGDRGDRGDRQGAARPGGQAPRPGARPAGPRPGNNPFTSGGSTGMARPQAPRPGGAPRPGGAGAPGGPRPQGAGGQDRAPRPQGGPGGAPRPQGGPGGARPTPGGMPRPQAPRPGGAPGGNRPNPGMMPQRPAAGPRPGGGGPGGRGPGGGGRPGGPGGGGGRPGGGGFAGRPGGGGGGFAGRPGGPGGGGGGFAGRPGGPGGGGGGRPGFGGRPGGPGGRGGTQGAFGRPGGPARRGRKSKRQRRQEYEAMQAPSVGGVMLPRGNGQSVRLSRGASLTDFAEKIGANPASLVGVMMNLGEMVTATQSVSDETLKLLADEMNFVLEIVSPEEEDRELLESFDIEFGEDEGGEEFLVARPPVVTVMGHVDHGKTRLLDTIRKTNVVAGEAGGITQHIGAYQVTTEVNDEERKITFIDTPGHEAFTAMRARGAKSTDIAILVVAANDGVMPQTIEALNHAKAADVPIVVAVNKIDVEGADPTKVRGQLTEFGLVAEEYGGDTMFVDISAKQGLNIESLLEAVVLTADASLDLRANPEQDAQGIAIESHLDRGRGAVATVLVQRGTLRVGDTMVVGDAYGRVRAMLDDKGENVEEAGPSTPVLVLGLTNVPGAGDNFLVVDEDRTARQIAEKRAARERNANFARRGVRFSLENLDEALKAGLVQELNLIIKGDASGSVEALESSLLQLDVGEEVDIRILHRGVGAVTESDINLATGSDAIVIGFNVRAAGRAAQMAEREGVDVRYYSVIYQAIEEIEAALKGMLKPEYEEVELGTAEIREVFKSSKLGNIAGVLVRSGEVKRNTKARLIRDGKVIAESLNISGLRRFKDDVTEIREGFEGGINLGNFNDIKVDDVIATYEMREKPRS</sequence>
<organism>
    <name type="scientific">Streptomyces avermitilis (strain ATCC 31267 / DSM 46492 / JCM 5070 / NBRC 14893 / NCIMB 12804 / NRRL 8165 / MA-4680)</name>
    <dbReference type="NCBI Taxonomy" id="227882"/>
    <lineage>
        <taxon>Bacteria</taxon>
        <taxon>Bacillati</taxon>
        <taxon>Actinomycetota</taxon>
        <taxon>Actinomycetes</taxon>
        <taxon>Kitasatosporales</taxon>
        <taxon>Streptomycetaceae</taxon>
        <taxon>Streptomyces</taxon>
    </lineage>
</organism>